<organism>
    <name type="scientific">Xanthomonas campestris pv. campestris (strain 8004)</name>
    <dbReference type="NCBI Taxonomy" id="314565"/>
    <lineage>
        <taxon>Bacteria</taxon>
        <taxon>Pseudomonadati</taxon>
        <taxon>Pseudomonadota</taxon>
        <taxon>Gammaproteobacteria</taxon>
        <taxon>Lysobacterales</taxon>
        <taxon>Lysobacteraceae</taxon>
        <taxon>Xanthomonas</taxon>
    </lineage>
</organism>
<reference key="1">
    <citation type="journal article" date="2005" name="Genome Res.">
        <title>Comparative and functional genomic analyses of the pathogenicity of phytopathogen Xanthomonas campestris pv. campestris.</title>
        <authorList>
            <person name="Qian W."/>
            <person name="Jia Y."/>
            <person name="Ren S.-X."/>
            <person name="He Y.-Q."/>
            <person name="Feng J.-X."/>
            <person name="Lu L.-F."/>
            <person name="Sun Q."/>
            <person name="Ying G."/>
            <person name="Tang D.-J."/>
            <person name="Tang H."/>
            <person name="Wu W."/>
            <person name="Hao P."/>
            <person name="Wang L."/>
            <person name="Jiang B.-L."/>
            <person name="Zeng S."/>
            <person name="Gu W.-Y."/>
            <person name="Lu G."/>
            <person name="Rong L."/>
            <person name="Tian Y."/>
            <person name="Yao Z."/>
            <person name="Fu G."/>
            <person name="Chen B."/>
            <person name="Fang R."/>
            <person name="Qiang B."/>
            <person name="Chen Z."/>
            <person name="Zhao G.-P."/>
            <person name="Tang J.-L."/>
            <person name="He C."/>
        </authorList>
    </citation>
    <scope>NUCLEOTIDE SEQUENCE [LARGE SCALE GENOMIC DNA]</scope>
    <source>
        <strain>8004</strain>
    </source>
</reference>
<name>RF3_XANC8</name>
<dbReference type="EMBL" id="CP000050">
    <property type="protein sequence ID" value="AAY48318.1"/>
    <property type="molecule type" value="Genomic_DNA"/>
</dbReference>
<dbReference type="RefSeq" id="WP_011037984.1">
    <property type="nucleotide sequence ID" value="NZ_CP155948.1"/>
</dbReference>
<dbReference type="SMR" id="Q4UXA5"/>
<dbReference type="KEGG" id="xcb:XC_1249"/>
<dbReference type="HOGENOM" id="CLU_002794_2_1_6"/>
<dbReference type="Proteomes" id="UP000000420">
    <property type="component" value="Chromosome"/>
</dbReference>
<dbReference type="GO" id="GO:0005829">
    <property type="term" value="C:cytosol"/>
    <property type="evidence" value="ECO:0007669"/>
    <property type="project" value="TreeGrafter"/>
</dbReference>
<dbReference type="GO" id="GO:0005525">
    <property type="term" value="F:GTP binding"/>
    <property type="evidence" value="ECO:0007669"/>
    <property type="project" value="UniProtKB-UniRule"/>
</dbReference>
<dbReference type="GO" id="GO:0003924">
    <property type="term" value="F:GTPase activity"/>
    <property type="evidence" value="ECO:0007669"/>
    <property type="project" value="InterPro"/>
</dbReference>
<dbReference type="GO" id="GO:0097216">
    <property type="term" value="F:guanosine tetraphosphate binding"/>
    <property type="evidence" value="ECO:0007669"/>
    <property type="project" value="UniProtKB-ARBA"/>
</dbReference>
<dbReference type="GO" id="GO:0016150">
    <property type="term" value="F:translation release factor activity, codon nonspecific"/>
    <property type="evidence" value="ECO:0007669"/>
    <property type="project" value="TreeGrafter"/>
</dbReference>
<dbReference type="GO" id="GO:0016149">
    <property type="term" value="F:translation release factor activity, codon specific"/>
    <property type="evidence" value="ECO:0007669"/>
    <property type="project" value="UniProtKB-UniRule"/>
</dbReference>
<dbReference type="GO" id="GO:0006449">
    <property type="term" value="P:regulation of translational termination"/>
    <property type="evidence" value="ECO:0007669"/>
    <property type="project" value="UniProtKB-UniRule"/>
</dbReference>
<dbReference type="CDD" id="cd04169">
    <property type="entry name" value="RF3"/>
    <property type="match status" value="1"/>
</dbReference>
<dbReference type="CDD" id="cd03689">
    <property type="entry name" value="RF3_II"/>
    <property type="match status" value="1"/>
</dbReference>
<dbReference type="CDD" id="cd16259">
    <property type="entry name" value="RF3_III"/>
    <property type="match status" value="1"/>
</dbReference>
<dbReference type="FunFam" id="2.40.30.10:FF:000040">
    <property type="entry name" value="Peptide chain release factor 3"/>
    <property type="match status" value="1"/>
</dbReference>
<dbReference type="FunFam" id="3.30.70.3280:FF:000001">
    <property type="entry name" value="Peptide chain release factor 3"/>
    <property type="match status" value="1"/>
</dbReference>
<dbReference type="FunFam" id="3.40.50.300:FF:000542">
    <property type="entry name" value="Peptide chain release factor 3"/>
    <property type="match status" value="1"/>
</dbReference>
<dbReference type="Gene3D" id="3.40.50.300">
    <property type="entry name" value="P-loop containing nucleotide triphosphate hydrolases"/>
    <property type="match status" value="2"/>
</dbReference>
<dbReference type="Gene3D" id="3.30.70.3280">
    <property type="entry name" value="Peptide chain release factor 3, domain III"/>
    <property type="match status" value="1"/>
</dbReference>
<dbReference type="HAMAP" id="MF_00072">
    <property type="entry name" value="Rel_fac_3"/>
    <property type="match status" value="1"/>
</dbReference>
<dbReference type="InterPro" id="IPR053905">
    <property type="entry name" value="EF-G-like_DII"/>
</dbReference>
<dbReference type="InterPro" id="IPR035647">
    <property type="entry name" value="EFG_III/V"/>
</dbReference>
<dbReference type="InterPro" id="IPR031157">
    <property type="entry name" value="G_TR_CS"/>
</dbReference>
<dbReference type="InterPro" id="IPR027417">
    <property type="entry name" value="P-loop_NTPase"/>
</dbReference>
<dbReference type="InterPro" id="IPR004548">
    <property type="entry name" value="PrfC"/>
</dbReference>
<dbReference type="InterPro" id="IPR032090">
    <property type="entry name" value="RF3_C"/>
</dbReference>
<dbReference type="InterPro" id="IPR038467">
    <property type="entry name" value="RF3_dom_3_sf"/>
</dbReference>
<dbReference type="InterPro" id="IPR041732">
    <property type="entry name" value="RF3_GTP-bd"/>
</dbReference>
<dbReference type="InterPro" id="IPR005225">
    <property type="entry name" value="Small_GTP-bd"/>
</dbReference>
<dbReference type="InterPro" id="IPR000795">
    <property type="entry name" value="T_Tr_GTP-bd_dom"/>
</dbReference>
<dbReference type="InterPro" id="IPR009000">
    <property type="entry name" value="Transl_B-barrel_sf"/>
</dbReference>
<dbReference type="NCBIfam" id="TIGR00503">
    <property type="entry name" value="prfC"/>
    <property type="match status" value="1"/>
</dbReference>
<dbReference type="NCBIfam" id="NF001964">
    <property type="entry name" value="PRK00741.1"/>
    <property type="match status" value="1"/>
</dbReference>
<dbReference type="NCBIfam" id="TIGR00231">
    <property type="entry name" value="small_GTP"/>
    <property type="match status" value="1"/>
</dbReference>
<dbReference type="PANTHER" id="PTHR43556">
    <property type="entry name" value="PEPTIDE CHAIN RELEASE FACTOR RF3"/>
    <property type="match status" value="1"/>
</dbReference>
<dbReference type="PANTHER" id="PTHR43556:SF2">
    <property type="entry name" value="PEPTIDE CHAIN RELEASE FACTOR RF3"/>
    <property type="match status" value="1"/>
</dbReference>
<dbReference type="Pfam" id="PF22042">
    <property type="entry name" value="EF-G_D2"/>
    <property type="match status" value="1"/>
</dbReference>
<dbReference type="Pfam" id="PF00009">
    <property type="entry name" value="GTP_EFTU"/>
    <property type="match status" value="1"/>
</dbReference>
<dbReference type="Pfam" id="PF16658">
    <property type="entry name" value="RF3_C"/>
    <property type="match status" value="1"/>
</dbReference>
<dbReference type="PRINTS" id="PR00315">
    <property type="entry name" value="ELONGATNFCT"/>
</dbReference>
<dbReference type="SUPFAM" id="SSF54980">
    <property type="entry name" value="EF-G C-terminal domain-like"/>
    <property type="match status" value="1"/>
</dbReference>
<dbReference type="SUPFAM" id="SSF52540">
    <property type="entry name" value="P-loop containing nucleoside triphosphate hydrolases"/>
    <property type="match status" value="1"/>
</dbReference>
<dbReference type="SUPFAM" id="SSF50447">
    <property type="entry name" value="Translation proteins"/>
    <property type="match status" value="1"/>
</dbReference>
<dbReference type="PROSITE" id="PS00301">
    <property type="entry name" value="G_TR_1"/>
    <property type="match status" value="1"/>
</dbReference>
<dbReference type="PROSITE" id="PS51722">
    <property type="entry name" value="G_TR_2"/>
    <property type="match status" value="1"/>
</dbReference>
<sequence>MSEVSNEAARRRTFAIISHPDAGKTTLTEKLLLFGGAIQMAGSVKGRKAARHATSDWMALEKERGISVTSSVMQFPYEDKIVNLLDTPGHADFGEDTYRVLTAVDSALMVIDVAKGVEERTIKLMEVCRLRDTPIMTFINKLDREGKNPIDLLDEVETVLGIQCAPVTWPIGMGQRLKGVVHLITGEVHLYEQGRNFTRQDSTIFPSLDAPGLAEKIGTQMLDELREELELVQGASNPFDLDAYRAGQQTPVFFGSGVNNFGVQPLLDFFVEHAPPPQARDTTGRRVEAVEPKLSGFVFKIQANMDPQHRDRVAFMRVCSGKFTAGMKALHVRSGKDVKLANALTFMASDREIAAEAWPGDVIGIHNHGTISIGDTFTEGESLSFTGIPNFAPELFRRARLRDPLKLKQLQKGLAQLSEEGATQFFRPLMSNDLILGAVGVLQFDVVAYRLKDEYGVDAIFEPVSVTTARWVHCDNPKKLEEFREKNAGNLGIDAAGQLVYLAPTRVNLQLAQERAPDVRFSATREHAYATAVD</sequence>
<accession>Q4UXA5</accession>
<keyword id="KW-0963">Cytoplasm</keyword>
<keyword id="KW-0342">GTP-binding</keyword>
<keyword id="KW-0547">Nucleotide-binding</keyword>
<keyword id="KW-0648">Protein biosynthesis</keyword>
<proteinExistence type="inferred from homology"/>
<feature type="chain" id="PRO_0000242226" description="Peptide chain release factor 3">
    <location>
        <begin position="1"/>
        <end position="534"/>
    </location>
</feature>
<feature type="domain" description="tr-type G">
    <location>
        <begin position="9"/>
        <end position="278"/>
    </location>
</feature>
<feature type="binding site" evidence="1">
    <location>
        <begin position="18"/>
        <end position="25"/>
    </location>
    <ligand>
        <name>GTP</name>
        <dbReference type="ChEBI" id="CHEBI:37565"/>
    </ligand>
</feature>
<feature type="binding site" evidence="1">
    <location>
        <begin position="86"/>
        <end position="90"/>
    </location>
    <ligand>
        <name>GTP</name>
        <dbReference type="ChEBI" id="CHEBI:37565"/>
    </ligand>
</feature>
<feature type="binding site" evidence="1">
    <location>
        <begin position="140"/>
        <end position="143"/>
    </location>
    <ligand>
        <name>GTP</name>
        <dbReference type="ChEBI" id="CHEBI:37565"/>
    </ligand>
</feature>
<protein>
    <recommendedName>
        <fullName evidence="1">Peptide chain release factor 3</fullName>
        <shortName evidence="1">RF-3</shortName>
    </recommendedName>
</protein>
<gene>
    <name evidence="1" type="primary">prfC</name>
    <name type="ordered locus">XC_1249</name>
</gene>
<comment type="function">
    <text evidence="1">Increases the formation of ribosomal termination complexes and stimulates activities of RF-1 and RF-2. It binds guanine nucleotides and has strong preference for UGA stop codons. It may interact directly with the ribosome. The stimulation of RF-1 and RF-2 is significantly reduced by GTP and GDP, but not by GMP.</text>
</comment>
<comment type="subcellular location">
    <subcellularLocation>
        <location evidence="1">Cytoplasm</location>
    </subcellularLocation>
</comment>
<comment type="similarity">
    <text evidence="1">Belongs to the TRAFAC class translation factor GTPase superfamily. Classic translation factor GTPase family. PrfC subfamily.</text>
</comment>
<evidence type="ECO:0000255" key="1">
    <source>
        <dbReference type="HAMAP-Rule" id="MF_00072"/>
    </source>
</evidence>